<keyword id="KW-0378">Hydrolase</keyword>
<keyword id="KW-0645">Protease</keyword>
<keyword id="KW-0964">Secreted</keyword>
<keyword id="KW-0720">Serine protease</keyword>
<keyword id="KW-0732">Signal</keyword>
<proteinExistence type="inferred from homology"/>
<name>SPLD_STAA1</name>
<evidence type="ECO:0000250" key="1"/>
<evidence type="ECO:0000255" key="2"/>
<evidence type="ECO:0000305" key="3"/>
<organism>
    <name type="scientific">Staphylococcus aureus (strain Mu3 / ATCC 700698)</name>
    <dbReference type="NCBI Taxonomy" id="418127"/>
    <lineage>
        <taxon>Bacteria</taxon>
        <taxon>Bacillati</taxon>
        <taxon>Bacillota</taxon>
        <taxon>Bacilli</taxon>
        <taxon>Bacillales</taxon>
        <taxon>Staphylococcaceae</taxon>
        <taxon>Staphylococcus</taxon>
    </lineage>
</organism>
<dbReference type="EC" id="3.4.21.-"/>
<dbReference type="EMBL" id="AP009324">
    <property type="protein sequence ID" value="BAF78678.1"/>
    <property type="molecule type" value="Genomic_DNA"/>
</dbReference>
<dbReference type="RefSeq" id="WP_001038704.1">
    <property type="nucleotide sequence ID" value="NC_009782.1"/>
</dbReference>
<dbReference type="SMR" id="A7X3Q6"/>
<dbReference type="MEROPS" id="S01.526"/>
<dbReference type="KEGG" id="saw:SAHV_1795"/>
<dbReference type="HOGENOM" id="CLU_073589_2_0_9"/>
<dbReference type="GO" id="GO:0005576">
    <property type="term" value="C:extracellular region"/>
    <property type="evidence" value="ECO:0007669"/>
    <property type="project" value="UniProtKB-SubCell"/>
</dbReference>
<dbReference type="GO" id="GO:0008236">
    <property type="term" value="F:serine-type peptidase activity"/>
    <property type="evidence" value="ECO:0007669"/>
    <property type="project" value="UniProtKB-KW"/>
</dbReference>
<dbReference type="GO" id="GO:0006508">
    <property type="term" value="P:proteolysis"/>
    <property type="evidence" value="ECO:0007669"/>
    <property type="project" value="UniProtKB-KW"/>
</dbReference>
<dbReference type="Gene3D" id="2.40.10.10">
    <property type="entry name" value="Trypsin-like serine proteases"/>
    <property type="match status" value="2"/>
</dbReference>
<dbReference type="InterPro" id="IPR009003">
    <property type="entry name" value="Peptidase_S1_PA"/>
</dbReference>
<dbReference type="InterPro" id="IPR043504">
    <property type="entry name" value="Peptidase_S1_PA_chymotrypsin"/>
</dbReference>
<dbReference type="InterPro" id="IPR008256">
    <property type="entry name" value="Peptidase_S1B"/>
</dbReference>
<dbReference type="InterPro" id="IPR028301">
    <property type="entry name" value="V8_his_AS"/>
</dbReference>
<dbReference type="PANTHER" id="PTHR43019:SF23">
    <property type="entry name" value="PROTEASE DO-LIKE 5, CHLOROPLASTIC"/>
    <property type="match status" value="1"/>
</dbReference>
<dbReference type="PANTHER" id="PTHR43019">
    <property type="entry name" value="SERINE ENDOPROTEASE DEGS"/>
    <property type="match status" value="1"/>
</dbReference>
<dbReference type="Pfam" id="PF13365">
    <property type="entry name" value="Trypsin_2"/>
    <property type="match status" value="1"/>
</dbReference>
<dbReference type="PRINTS" id="PR00839">
    <property type="entry name" value="V8PROTEASE"/>
</dbReference>
<dbReference type="SUPFAM" id="SSF50494">
    <property type="entry name" value="Trypsin-like serine proteases"/>
    <property type="match status" value="1"/>
</dbReference>
<dbReference type="PROSITE" id="PS00672">
    <property type="entry name" value="V8_HIS"/>
    <property type="match status" value="1"/>
</dbReference>
<comment type="subcellular location">
    <subcellularLocation>
        <location evidence="1">Secreted</location>
    </subcellularLocation>
</comment>
<comment type="similarity">
    <text evidence="3">Belongs to the peptidase S1B family.</text>
</comment>
<gene>
    <name type="primary">splD</name>
    <name type="ordered locus">SAHV_1795</name>
</gene>
<reference key="1">
    <citation type="journal article" date="2008" name="Antimicrob. Agents Chemother.">
        <title>Mutated response regulator graR is responsible for phenotypic conversion of Staphylococcus aureus from heterogeneous vancomycin-intermediate resistance to vancomycin-intermediate resistance.</title>
        <authorList>
            <person name="Neoh H.-M."/>
            <person name="Cui L."/>
            <person name="Yuzawa H."/>
            <person name="Takeuchi F."/>
            <person name="Matsuo M."/>
            <person name="Hiramatsu K."/>
        </authorList>
    </citation>
    <scope>NUCLEOTIDE SEQUENCE [LARGE SCALE GENOMIC DNA]</scope>
    <source>
        <strain>Mu3 / ATCC 700698</strain>
    </source>
</reference>
<sequence>MNKNIIIKSIAALTILTSITGVGTTVVDGIQQTAKAENSVKLITNTNVAPYSGVTWMGAGTGFVVGNHTIITNKHVTYHMKVGDEIKAHPNGFYNNGGGLYKVTKIVDYPGKEDIAVVQVEEKSTQPKGRKFKDFTSKFNIASEAKENEPISVIGYPNPNGNKLQMYESTGKVLSVNGNIVTSDAVVQPGSSGSPILNSKREAIGVMYASDKPTGESTRSFAVYFSPEIKKFIADNLDK</sequence>
<feature type="signal peptide" evidence="2">
    <location>
        <begin position="1"/>
        <end position="36"/>
    </location>
</feature>
<feature type="chain" id="PRO_0000359565" description="Serine protease SplD">
    <location>
        <begin position="37"/>
        <end position="239"/>
    </location>
</feature>
<feature type="active site" description="Charge relay system" evidence="1">
    <location>
        <position position="75"/>
    </location>
</feature>
<feature type="active site" description="Charge relay system" evidence="1">
    <location>
        <position position="114"/>
    </location>
</feature>
<feature type="active site" description="Charge relay system" evidence="1">
    <location>
        <position position="192"/>
    </location>
</feature>
<accession>A7X3Q6</accession>
<protein>
    <recommendedName>
        <fullName>Serine protease SplD</fullName>
        <ecNumber>3.4.21.-</ecNumber>
    </recommendedName>
</protein>